<dbReference type="EC" id="3.1.3.2"/>
<dbReference type="EMBL" id="X56939">
    <property type="protein sequence ID" value="CAA40258.1"/>
    <property type="molecule type" value="Genomic_DNA"/>
</dbReference>
<dbReference type="EMBL" id="CU329671">
    <property type="protein sequence ID" value="CAA22278.1"/>
    <property type="molecule type" value="Genomic_DNA"/>
</dbReference>
<dbReference type="EMBL" id="AB027777">
    <property type="protein sequence ID" value="BAA87081.1"/>
    <property type="molecule type" value="Genomic_DNA"/>
</dbReference>
<dbReference type="PIR" id="S14119">
    <property type="entry name" value="S14119"/>
</dbReference>
<dbReference type="RefSeq" id="NP_595181.1">
    <property type="nucleotide sequence ID" value="NM_001021089.2"/>
</dbReference>
<dbReference type="SMR" id="Q01682"/>
<dbReference type="BioGRID" id="277132">
    <property type="interactions" value="16"/>
</dbReference>
<dbReference type="FunCoup" id="Q01682">
    <property type="interactions" value="223"/>
</dbReference>
<dbReference type="STRING" id="284812.Q01682"/>
<dbReference type="GlyCosmos" id="Q01682">
    <property type="glycosylation" value="9 sites, No reported glycans"/>
</dbReference>
<dbReference type="iPTMnet" id="Q01682"/>
<dbReference type="PaxDb" id="4896-SPBC428.03c.1"/>
<dbReference type="EnsemblFungi" id="SPBC428.03c.1">
    <property type="protein sequence ID" value="SPBC428.03c.1:pep"/>
    <property type="gene ID" value="SPBC428.03c"/>
</dbReference>
<dbReference type="GeneID" id="2540606"/>
<dbReference type="KEGG" id="spo:2540606"/>
<dbReference type="PomBase" id="SPBC428.03c">
    <property type="gene designation" value="pho4"/>
</dbReference>
<dbReference type="VEuPathDB" id="FungiDB:SPBC428.03c"/>
<dbReference type="eggNOG" id="KOG1382">
    <property type="taxonomic scope" value="Eukaryota"/>
</dbReference>
<dbReference type="HOGENOM" id="CLU_020880_0_1_1"/>
<dbReference type="InParanoid" id="Q01682"/>
<dbReference type="OMA" id="SLHSPWC"/>
<dbReference type="PhylomeDB" id="Q01682"/>
<dbReference type="BRENDA" id="3.1.3.100">
    <property type="organism ID" value="5613"/>
</dbReference>
<dbReference type="PRO" id="PR:Q01682"/>
<dbReference type="Proteomes" id="UP000002485">
    <property type="component" value="Chromosome II"/>
</dbReference>
<dbReference type="GO" id="GO:0030287">
    <property type="term" value="C:cell wall-bounded periplasmic space"/>
    <property type="evidence" value="ECO:0000266"/>
    <property type="project" value="PomBase"/>
</dbReference>
<dbReference type="GO" id="GO:0005576">
    <property type="term" value="C:extracellular region"/>
    <property type="evidence" value="ECO:0000266"/>
    <property type="project" value="PomBase"/>
</dbReference>
<dbReference type="GO" id="GO:0009277">
    <property type="term" value="C:fungal-type cell wall"/>
    <property type="evidence" value="ECO:0000266"/>
    <property type="project" value="PomBase"/>
</dbReference>
<dbReference type="GO" id="GO:0003993">
    <property type="term" value="F:acid phosphatase activity"/>
    <property type="evidence" value="ECO:0000315"/>
    <property type="project" value="PomBase"/>
</dbReference>
<dbReference type="GO" id="GO:0016791">
    <property type="term" value="F:phosphatase activity"/>
    <property type="evidence" value="ECO:0000314"/>
    <property type="project" value="PomBase"/>
</dbReference>
<dbReference type="GO" id="GO:0042131">
    <property type="term" value="F:thiamine phosphate phosphatase activity"/>
    <property type="evidence" value="ECO:0000315"/>
    <property type="project" value="PomBase"/>
</dbReference>
<dbReference type="GO" id="GO:0036172">
    <property type="term" value="P:thiamine salvage"/>
    <property type="evidence" value="ECO:0000315"/>
    <property type="project" value="PomBase"/>
</dbReference>
<dbReference type="CDD" id="cd07061">
    <property type="entry name" value="HP_HAP_like"/>
    <property type="match status" value="1"/>
</dbReference>
<dbReference type="FunFam" id="3.40.50.1240:FF:000119">
    <property type="entry name" value="Thiamine-repressible acid phosphatase SPBC21H7.03c"/>
    <property type="match status" value="1"/>
</dbReference>
<dbReference type="Gene3D" id="3.40.50.1240">
    <property type="entry name" value="Phosphoglycerate mutase-like"/>
    <property type="match status" value="1"/>
</dbReference>
<dbReference type="InterPro" id="IPR033379">
    <property type="entry name" value="Acid_Pase_AS"/>
</dbReference>
<dbReference type="InterPro" id="IPR000560">
    <property type="entry name" value="His_Pase_clade-2"/>
</dbReference>
<dbReference type="InterPro" id="IPR029033">
    <property type="entry name" value="His_PPase_superfam"/>
</dbReference>
<dbReference type="InterPro" id="IPR016274">
    <property type="entry name" value="Histidine_acid_Pase_euk"/>
</dbReference>
<dbReference type="PANTHER" id="PTHR20963:SF18">
    <property type="entry name" value="ACID PHOSPHATASE PHO11-RELATED"/>
    <property type="match status" value="1"/>
</dbReference>
<dbReference type="PANTHER" id="PTHR20963">
    <property type="entry name" value="MULTIPLE INOSITOL POLYPHOSPHATE PHOSPHATASE-RELATED"/>
    <property type="match status" value="1"/>
</dbReference>
<dbReference type="Pfam" id="PF00328">
    <property type="entry name" value="His_Phos_2"/>
    <property type="match status" value="1"/>
</dbReference>
<dbReference type="PIRSF" id="PIRSF000894">
    <property type="entry name" value="Acid_phosphatase"/>
    <property type="match status" value="1"/>
</dbReference>
<dbReference type="SUPFAM" id="SSF53254">
    <property type="entry name" value="Phosphoglycerate mutase-like"/>
    <property type="match status" value="1"/>
</dbReference>
<dbReference type="PROSITE" id="PS00616">
    <property type="entry name" value="HIS_ACID_PHOSPHAT_1"/>
    <property type="match status" value="1"/>
</dbReference>
<dbReference type="PROSITE" id="PS00778">
    <property type="entry name" value="HIS_ACID_PHOSPHAT_2"/>
    <property type="match status" value="1"/>
</dbReference>
<accession>Q01682</accession>
<accession>Q9UU70</accession>
<name>PPA2_SCHPO</name>
<organism>
    <name type="scientific">Schizosaccharomyces pombe (strain 972 / ATCC 24843)</name>
    <name type="common">Fission yeast</name>
    <dbReference type="NCBI Taxonomy" id="284812"/>
    <lineage>
        <taxon>Eukaryota</taxon>
        <taxon>Fungi</taxon>
        <taxon>Dikarya</taxon>
        <taxon>Ascomycota</taxon>
        <taxon>Taphrinomycotina</taxon>
        <taxon>Schizosaccharomycetes</taxon>
        <taxon>Schizosaccharomycetales</taxon>
        <taxon>Schizosaccharomycetaceae</taxon>
        <taxon>Schizosaccharomyces</taxon>
    </lineage>
</organism>
<reference key="1">
    <citation type="journal article" date="1990" name="Curr. Genet.">
        <title>The structural gene coding for thiamin-repressible acid phosphatase in Schizosaccharomyces pombe.</title>
        <authorList>
            <person name="Yang J."/>
            <person name="Schweingruber M.E."/>
        </authorList>
    </citation>
    <scope>NUCLEOTIDE SEQUENCE [GENOMIC DNA]</scope>
    <scope>PROTEIN SEQUENCE OF 19-30</scope>
</reference>
<reference key="2">
    <citation type="journal article" date="2002" name="Nature">
        <title>The genome sequence of Schizosaccharomyces pombe.</title>
        <authorList>
            <person name="Wood V."/>
            <person name="Gwilliam R."/>
            <person name="Rajandream M.A."/>
            <person name="Lyne M.H."/>
            <person name="Lyne R."/>
            <person name="Stewart A."/>
            <person name="Sgouros J.G."/>
            <person name="Peat N."/>
            <person name="Hayles J."/>
            <person name="Baker S.G."/>
            <person name="Basham D."/>
            <person name="Bowman S."/>
            <person name="Brooks K."/>
            <person name="Brown D."/>
            <person name="Brown S."/>
            <person name="Chillingworth T."/>
            <person name="Churcher C.M."/>
            <person name="Collins M."/>
            <person name="Connor R."/>
            <person name="Cronin A."/>
            <person name="Davis P."/>
            <person name="Feltwell T."/>
            <person name="Fraser A."/>
            <person name="Gentles S."/>
            <person name="Goble A."/>
            <person name="Hamlin N."/>
            <person name="Harris D.E."/>
            <person name="Hidalgo J."/>
            <person name="Hodgson G."/>
            <person name="Holroyd S."/>
            <person name="Hornsby T."/>
            <person name="Howarth S."/>
            <person name="Huckle E.J."/>
            <person name="Hunt S."/>
            <person name="Jagels K."/>
            <person name="James K.D."/>
            <person name="Jones L."/>
            <person name="Jones M."/>
            <person name="Leather S."/>
            <person name="McDonald S."/>
            <person name="McLean J."/>
            <person name="Mooney P."/>
            <person name="Moule S."/>
            <person name="Mungall K.L."/>
            <person name="Murphy L.D."/>
            <person name="Niblett D."/>
            <person name="Odell C."/>
            <person name="Oliver K."/>
            <person name="O'Neil S."/>
            <person name="Pearson D."/>
            <person name="Quail M.A."/>
            <person name="Rabbinowitsch E."/>
            <person name="Rutherford K.M."/>
            <person name="Rutter S."/>
            <person name="Saunders D."/>
            <person name="Seeger K."/>
            <person name="Sharp S."/>
            <person name="Skelton J."/>
            <person name="Simmonds M.N."/>
            <person name="Squares R."/>
            <person name="Squares S."/>
            <person name="Stevens K."/>
            <person name="Taylor K."/>
            <person name="Taylor R.G."/>
            <person name="Tivey A."/>
            <person name="Walsh S.V."/>
            <person name="Warren T."/>
            <person name="Whitehead S."/>
            <person name="Woodward J.R."/>
            <person name="Volckaert G."/>
            <person name="Aert R."/>
            <person name="Robben J."/>
            <person name="Grymonprez B."/>
            <person name="Weltjens I."/>
            <person name="Vanstreels E."/>
            <person name="Rieger M."/>
            <person name="Schaefer M."/>
            <person name="Mueller-Auer S."/>
            <person name="Gabel C."/>
            <person name="Fuchs M."/>
            <person name="Duesterhoeft A."/>
            <person name="Fritzc C."/>
            <person name="Holzer E."/>
            <person name="Moestl D."/>
            <person name="Hilbert H."/>
            <person name="Borzym K."/>
            <person name="Langer I."/>
            <person name="Beck A."/>
            <person name="Lehrach H."/>
            <person name="Reinhardt R."/>
            <person name="Pohl T.M."/>
            <person name="Eger P."/>
            <person name="Zimmermann W."/>
            <person name="Wedler H."/>
            <person name="Wambutt R."/>
            <person name="Purnelle B."/>
            <person name="Goffeau A."/>
            <person name="Cadieu E."/>
            <person name="Dreano S."/>
            <person name="Gloux S."/>
            <person name="Lelaure V."/>
            <person name="Mottier S."/>
            <person name="Galibert F."/>
            <person name="Aves S.J."/>
            <person name="Xiang Z."/>
            <person name="Hunt C."/>
            <person name="Moore K."/>
            <person name="Hurst S.M."/>
            <person name="Lucas M."/>
            <person name="Rochet M."/>
            <person name="Gaillardin C."/>
            <person name="Tallada V.A."/>
            <person name="Garzon A."/>
            <person name="Thode G."/>
            <person name="Daga R.R."/>
            <person name="Cruzado L."/>
            <person name="Jimenez J."/>
            <person name="Sanchez M."/>
            <person name="del Rey F."/>
            <person name="Benito J."/>
            <person name="Dominguez A."/>
            <person name="Revuelta J.L."/>
            <person name="Moreno S."/>
            <person name="Armstrong J."/>
            <person name="Forsburg S.L."/>
            <person name="Cerutti L."/>
            <person name="Lowe T."/>
            <person name="McCombie W.R."/>
            <person name="Paulsen I."/>
            <person name="Potashkin J."/>
            <person name="Shpakovski G.V."/>
            <person name="Ussery D."/>
            <person name="Barrell B.G."/>
            <person name="Nurse P."/>
        </authorList>
    </citation>
    <scope>NUCLEOTIDE SEQUENCE [LARGE SCALE GENOMIC DNA]</scope>
    <source>
        <strain>972 / ATCC 24843</strain>
    </source>
</reference>
<reference key="3">
    <citation type="journal article" date="2000" name="Genes Cells">
        <title>Large-scale screening of intracellular protein localization in living fission yeast cells by the use of a GFP-fusion genomic DNA library.</title>
        <authorList>
            <person name="Ding D.-Q."/>
            <person name="Tomita Y."/>
            <person name="Yamamoto A."/>
            <person name="Chikashige Y."/>
            <person name="Haraguchi T."/>
            <person name="Hiraoka Y."/>
        </authorList>
    </citation>
    <scope>NUCLEOTIDE SEQUENCE [LARGE SCALE GENOMIC DNA] OF 1-71</scope>
    <source>
        <strain>ATCC 38364 / 968</strain>
    </source>
</reference>
<comment type="function">
    <text>May dephosphorylate thiamine phosphates.</text>
</comment>
<comment type="catalytic activity">
    <reaction>
        <text>a phosphate monoester + H2O = an alcohol + phosphate</text>
        <dbReference type="Rhea" id="RHEA:15017"/>
        <dbReference type="ChEBI" id="CHEBI:15377"/>
        <dbReference type="ChEBI" id="CHEBI:30879"/>
        <dbReference type="ChEBI" id="CHEBI:43474"/>
        <dbReference type="ChEBI" id="CHEBI:67140"/>
        <dbReference type="EC" id="3.1.3.2"/>
    </reaction>
</comment>
<comment type="subcellular location">
    <subcellularLocation>
        <location>Secreted</location>
        <location>Cell wall</location>
    </subcellularLocation>
</comment>
<comment type="induction">
    <text>Repressed by thiamine.</text>
</comment>
<comment type="similarity">
    <text evidence="4">Belongs to the histidine acid phosphatase family.</text>
</comment>
<feature type="signal peptide" evidence="3">
    <location>
        <begin position="1"/>
        <end position="18"/>
    </location>
</feature>
<feature type="chain" id="PRO_0000023952" description="Thiamine-repressible acid phosphatase pho4">
    <location>
        <begin position="19"/>
        <end position="463"/>
    </location>
</feature>
<feature type="active site" description="Nucleophile" evidence="1">
    <location>
        <position position="69"/>
    </location>
</feature>
<feature type="active site" description="Proton donor" evidence="1">
    <location>
        <position position="341"/>
    </location>
</feature>
<feature type="glycosylation site" description="N-linked (GlcNAc...) asparagine" evidence="2">
    <location>
        <position position="98"/>
    </location>
</feature>
<feature type="glycosylation site" description="N-linked (GlcNAc...) asparagine" evidence="2">
    <location>
        <position position="104"/>
    </location>
</feature>
<feature type="glycosylation site" description="N-linked (GlcNAc...) asparagine" evidence="2">
    <location>
        <position position="186"/>
    </location>
</feature>
<feature type="glycosylation site" description="N-linked (GlcNAc...) asparagine" evidence="2">
    <location>
        <position position="221"/>
    </location>
</feature>
<feature type="glycosylation site" description="N-linked (GlcNAc...) asparagine" evidence="2">
    <location>
        <position position="251"/>
    </location>
</feature>
<feature type="glycosylation site" description="N-linked (GlcNAc...) asparagine" evidence="2">
    <location>
        <position position="328"/>
    </location>
</feature>
<feature type="glycosylation site" description="N-linked (GlcNAc...) asparagine" evidence="2">
    <location>
        <position position="433"/>
    </location>
</feature>
<feature type="glycosylation site" description="N-linked (GlcNAc...) asparagine" evidence="2">
    <location>
        <position position="439"/>
    </location>
</feature>
<feature type="glycosylation site" description="N-linked (GlcNAc...) asparagine" evidence="2">
    <location>
        <position position="458"/>
    </location>
</feature>
<keyword id="KW-0134">Cell wall</keyword>
<keyword id="KW-0903">Direct protein sequencing</keyword>
<keyword id="KW-0325">Glycoprotein</keyword>
<keyword id="KW-0378">Hydrolase</keyword>
<keyword id="KW-1185">Reference proteome</keyword>
<keyword id="KW-0964">Secreted</keyword>
<keyword id="KW-0732">Signal</keyword>
<protein>
    <recommendedName>
        <fullName>Thiamine-repressible acid phosphatase pho4</fullName>
        <ecNumber>3.1.3.2</ecNumber>
    </recommendedName>
</protein>
<proteinExistence type="evidence at protein level"/>
<gene>
    <name type="primary">pho4</name>
    <name type="ORF">SPBC428.03c</name>
</gene>
<sequence length="463" mass="52119">MKLSGISLWLLAASIVHAGKSQFEAFENEFYFKDHLGTISVYHEPYFNGPTTSFPESCAIKQVHLLQRHGSRNPTGDDTATDVSSAQYIDIFQNKLLNGSIPVNFSYPENPLYFVKHWTPVIKAENADQLSSSGRIELFDLGRQVFERYYELFDTDVYDINTAAQERVVDSAEWFSYGMFGDDMQNKTNFIVLPEDDSAGANSLAMYYSCPVYEDNNIDENTTEAAHTSWRNVFLKPIANRLNKYFDSGYNLTVSDVRSLYYICVYEIALRDNSDFCSLFTPSEFLNFEYDSDLDYAYWGGPASEWASTLGGAYVNNLANNLRKGVNNASDRKVFLAFTHDSQIIPVEAALGFFPDITPEHPLPTDKNIFTYSLKTSSFVPFAGNLITELFLCSDNKYYVRHLVNQQVYPLTDCGYGPSGASDGLCELSAYLNSSVRVNSTSNGIANFNSQCQAHSTNVTVYY</sequence>
<evidence type="ECO:0000250" key="1"/>
<evidence type="ECO:0000255" key="2"/>
<evidence type="ECO:0000269" key="3">
    <source>
    </source>
</evidence>
<evidence type="ECO:0000305" key="4"/>